<dbReference type="EMBL" id="CP000749">
    <property type="protein sequence ID" value="ABR71322.1"/>
    <property type="molecule type" value="Genomic_DNA"/>
</dbReference>
<dbReference type="SMR" id="A6VXZ3"/>
<dbReference type="STRING" id="400668.Mmwyl1_2400"/>
<dbReference type="KEGG" id="mmw:Mmwyl1_2400"/>
<dbReference type="eggNOG" id="COG0102">
    <property type="taxonomic scope" value="Bacteria"/>
</dbReference>
<dbReference type="HOGENOM" id="CLU_082184_2_2_6"/>
<dbReference type="OrthoDB" id="9801330at2"/>
<dbReference type="GO" id="GO:0022625">
    <property type="term" value="C:cytosolic large ribosomal subunit"/>
    <property type="evidence" value="ECO:0007669"/>
    <property type="project" value="TreeGrafter"/>
</dbReference>
<dbReference type="GO" id="GO:0003729">
    <property type="term" value="F:mRNA binding"/>
    <property type="evidence" value="ECO:0007669"/>
    <property type="project" value="TreeGrafter"/>
</dbReference>
<dbReference type="GO" id="GO:0003735">
    <property type="term" value="F:structural constituent of ribosome"/>
    <property type="evidence" value="ECO:0007669"/>
    <property type="project" value="InterPro"/>
</dbReference>
<dbReference type="GO" id="GO:0017148">
    <property type="term" value="P:negative regulation of translation"/>
    <property type="evidence" value="ECO:0007669"/>
    <property type="project" value="TreeGrafter"/>
</dbReference>
<dbReference type="GO" id="GO:0006412">
    <property type="term" value="P:translation"/>
    <property type="evidence" value="ECO:0007669"/>
    <property type="project" value="UniProtKB-UniRule"/>
</dbReference>
<dbReference type="CDD" id="cd00392">
    <property type="entry name" value="Ribosomal_L13"/>
    <property type="match status" value="1"/>
</dbReference>
<dbReference type="FunFam" id="3.90.1180.10:FF:000001">
    <property type="entry name" value="50S ribosomal protein L13"/>
    <property type="match status" value="1"/>
</dbReference>
<dbReference type="Gene3D" id="3.90.1180.10">
    <property type="entry name" value="Ribosomal protein L13"/>
    <property type="match status" value="1"/>
</dbReference>
<dbReference type="HAMAP" id="MF_01366">
    <property type="entry name" value="Ribosomal_uL13"/>
    <property type="match status" value="1"/>
</dbReference>
<dbReference type="InterPro" id="IPR005822">
    <property type="entry name" value="Ribosomal_uL13"/>
</dbReference>
<dbReference type="InterPro" id="IPR005823">
    <property type="entry name" value="Ribosomal_uL13_bac-type"/>
</dbReference>
<dbReference type="InterPro" id="IPR023563">
    <property type="entry name" value="Ribosomal_uL13_CS"/>
</dbReference>
<dbReference type="InterPro" id="IPR036899">
    <property type="entry name" value="Ribosomal_uL13_sf"/>
</dbReference>
<dbReference type="NCBIfam" id="TIGR01066">
    <property type="entry name" value="rplM_bact"/>
    <property type="match status" value="1"/>
</dbReference>
<dbReference type="PANTHER" id="PTHR11545:SF2">
    <property type="entry name" value="LARGE RIBOSOMAL SUBUNIT PROTEIN UL13M"/>
    <property type="match status" value="1"/>
</dbReference>
<dbReference type="PANTHER" id="PTHR11545">
    <property type="entry name" value="RIBOSOMAL PROTEIN L13"/>
    <property type="match status" value="1"/>
</dbReference>
<dbReference type="Pfam" id="PF00572">
    <property type="entry name" value="Ribosomal_L13"/>
    <property type="match status" value="1"/>
</dbReference>
<dbReference type="PIRSF" id="PIRSF002181">
    <property type="entry name" value="Ribosomal_L13"/>
    <property type="match status" value="1"/>
</dbReference>
<dbReference type="SUPFAM" id="SSF52161">
    <property type="entry name" value="Ribosomal protein L13"/>
    <property type="match status" value="1"/>
</dbReference>
<dbReference type="PROSITE" id="PS00783">
    <property type="entry name" value="RIBOSOMAL_L13"/>
    <property type="match status" value="1"/>
</dbReference>
<accession>A6VXZ3</accession>
<reference key="1">
    <citation type="submission" date="2007-06" db="EMBL/GenBank/DDBJ databases">
        <title>Complete sequence of Marinomonas sp. MWYL1.</title>
        <authorList>
            <consortium name="US DOE Joint Genome Institute"/>
            <person name="Copeland A."/>
            <person name="Lucas S."/>
            <person name="Lapidus A."/>
            <person name="Barry K."/>
            <person name="Glavina del Rio T."/>
            <person name="Dalin E."/>
            <person name="Tice H."/>
            <person name="Pitluck S."/>
            <person name="Kiss H."/>
            <person name="Brettin T."/>
            <person name="Bruce D."/>
            <person name="Detter J.C."/>
            <person name="Han C."/>
            <person name="Schmutz J."/>
            <person name="Larimer F."/>
            <person name="Land M."/>
            <person name="Hauser L."/>
            <person name="Kyrpides N."/>
            <person name="Kim E."/>
            <person name="Johnston A.W.B."/>
            <person name="Todd J.D."/>
            <person name="Rogers R."/>
            <person name="Wexler M."/>
            <person name="Bond P.L."/>
            <person name="Li Y."/>
            <person name="Richardson P."/>
        </authorList>
    </citation>
    <scope>NUCLEOTIDE SEQUENCE [LARGE SCALE GENOMIC DNA]</scope>
    <source>
        <strain>MWYL1</strain>
    </source>
</reference>
<organism>
    <name type="scientific">Marinomonas sp. (strain MWYL1)</name>
    <dbReference type="NCBI Taxonomy" id="400668"/>
    <lineage>
        <taxon>Bacteria</taxon>
        <taxon>Pseudomonadati</taxon>
        <taxon>Pseudomonadota</taxon>
        <taxon>Gammaproteobacteria</taxon>
        <taxon>Oceanospirillales</taxon>
        <taxon>Oceanospirillaceae</taxon>
        <taxon>Marinomonas</taxon>
    </lineage>
</organism>
<keyword id="KW-0687">Ribonucleoprotein</keyword>
<keyword id="KW-0689">Ribosomal protein</keyword>
<evidence type="ECO:0000255" key="1">
    <source>
        <dbReference type="HAMAP-Rule" id="MF_01366"/>
    </source>
</evidence>
<evidence type="ECO:0000305" key="2"/>
<proteinExistence type="inferred from homology"/>
<comment type="function">
    <text evidence="1">This protein is one of the early assembly proteins of the 50S ribosomal subunit, although it is not seen to bind rRNA by itself. It is important during the early stages of 50S assembly.</text>
</comment>
<comment type="subunit">
    <text evidence="1">Part of the 50S ribosomal subunit.</text>
</comment>
<comment type="similarity">
    <text evidence="1">Belongs to the universal ribosomal protein uL13 family.</text>
</comment>
<protein>
    <recommendedName>
        <fullName evidence="1">Large ribosomal subunit protein uL13</fullName>
    </recommendedName>
    <alternativeName>
        <fullName evidence="2">50S ribosomal protein L13</fullName>
    </alternativeName>
</protein>
<feature type="chain" id="PRO_1000087092" description="Large ribosomal subunit protein uL13">
    <location>
        <begin position="1"/>
        <end position="142"/>
    </location>
</feature>
<sequence length="142" mass="15909">MKTFTAKPAEVRRDWFVVDAEGKTLGRLATEIARRLRGKHKAEYTPHVDTGDYIVVINAEKIHVTGNKAAAKQYYRHTGYPGGLRSMNFEKLIDHAPERVLEIAVKGMLPKGPLGRAMHKKMKVYAGTEHPHAAQQPQALNI</sequence>
<gene>
    <name evidence="1" type="primary">rplM</name>
    <name type="ordered locus">Mmwyl1_2400</name>
</gene>
<name>RL13_MARMS</name>